<feature type="chain" id="PRO_0000218733" description="Villin-2">
    <location>
        <begin position="1"/>
        <end position="976"/>
    </location>
</feature>
<feature type="repeat" description="Gelsolin-like 1" evidence="2">
    <location>
        <begin position="27"/>
        <end position="77"/>
    </location>
</feature>
<feature type="repeat" description="Gelsolin-like 2" evidence="2">
    <location>
        <begin position="148"/>
        <end position="188"/>
    </location>
</feature>
<feature type="repeat" description="Gelsolin-like 3" evidence="2">
    <location>
        <begin position="260"/>
        <end position="302"/>
    </location>
</feature>
<feature type="repeat" description="Gelsolin-like 4" evidence="2">
    <location>
        <begin position="399"/>
        <end position="450"/>
    </location>
</feature>
<feature type="repeat" description="Gelsolin-like 5" evidence="2">
    <location>
        <begin position="531"/>
        <end position="571"/>
    </location>
</feature>
<feature type="repeat" description="Gelsolin-like 6" evidence="2">
    <location>
        <begin position="633"/>
        <end position="674"/>
    </location>
</feature>
<feature type="domain" description="HP" evidence="3">
    <location>
        <begin position="911"/>
        <end position="976"/>
    </location>
</feature>
<feature type="region of interest" description="Disordered" evidence="4">
    <location>
        <begin position="769"/>
        <end position="917"/>
    </location>
</feature>
<feature type="compositionally biased region" description="Basic and acidic residues" evidence="4">
    <location>
        <begin position="782"/>
        <end position="794"/>
    </location>
</feature>
<feature type="compositionally biased region" description="Low complexity" evidence="4">
    <location>
        <begin position="795"/>
        <end position="812"/>
    </location>
</feature>
<feature type="compositionally biased region" description="Low complexity" evidence="4">
    <location>
        <begin position="823"/>
        <end position="841"/>
    </location>
</feature>
<feature type="compositionally biased region" description="Low complexity" evidence="4">
    <location>
        <begin position="848"/>
        <end position="858"/>
    </location>
</feature>
<feature type="compositionally biased region" description="Polar residues" evidence="4">
    <location>
        <begin position="908"/>
        <end position="917"/>
    </location>
</feature>
<feature type="modified residue" description="Phosphoserine" evidence="1">
    <location>
        <position position="890"/>
    </location>
</feature>
<feature type="sequence conflict" description="In Ref. 1; AAC31606." evidence="10" ref="1">
    <original>E</original>
    <variation>V</variation>
    <location>
        <position position="99"/>
    </location>
</feature>
<proteinExistence type="evidence at protein level"/>
<name>VILI2_ARATH</name>
<accession>O81644</accession>
<accession>O22946</accession>
<accession>Q0WV87</accession>
<accession>Q8RXZ3</accession>
<dbReference type="EMBL" id="AF081202">
    <property type="protein sequence ID" value="AAC31606.1"/>
    <property type="molecule type" value="mRNA"/>
</dbReference>
<dbReference type="EMBL" id="AC002339">
    <property type="protein sequence ID" value="AAC02774.2"/>
    <property type="molecule type" value="Genomic_DNA"/>
</dbReference>
<dbReference type="EMBL" id="CP002685">
    <property type="protein sequence ID" value="AEC10027.1"/>
    <property type="molecule type" value="Genomic_DNA"/>
</dbReference>
<dbReference type="EMBL" id="CP002685">
    <property type="protein sequence ID" value="ANM61457.1"/>
    <property type="molecule type" value="Genomic_DNA"/>
</dbReference>
<dbReference type="EMBL" id="AY080601">
    <property type="protein sequence ID" value="AAL85012.1"/>
    <property type="molecule type" value="mRNA"/>
</dbReference>
<dbReference type="EMBL" id="AY133782">
    <property type="protein sequence ID" value="AAM91716.1"/>
    <property type="molecule type" value="mRNA"/>
</dbReference>
<dbReference type="EMBL" id="AK226882">
    <property type="protein sequence ID" value="BAE98961.1"/>
    <property type="molecule type" value="mRNA"/>
</dbReference>
<dbReference type="PIR" id="E84845">
    <property type="entry name" value="E84845"/>
</dbReference>
<dbReference type="PIR" id="T50669">
    <property type="entry name" value="T50669"/>
</dbReference>
<dbReference type="RefSeq" id="NP_001323674.1">
    <property type="nucleotide sequence ID" value="NM_001336936.1"/>
</dbReference>
<dbReference type="RefSeq" id="NP_565958.1">
    <property type="nucleotide sequence ID" value="NM_129738.5"/>
</dbReference>
<dbReference type="SMR" id="O81644"/>
<dbReference type="BioGRID" id="4110">
    <property type="interactions" value="2"/>
</dbReference>
<dbReference type="FunCoup" id="O81644">
    <property type="interactions" value="1934"/>
</dbReference>
<dbReference type="IntAct" id="O81644">
    <property type="interactions" value="1"/>
</dbReference>
<dbReference type="STRING" id="3702.O81644"/>
<dbReference type="GlyGen" id="O81644">
    <property type="glycosylation" value="1 site"/>
</dbReference>
<dbReference type="iPTMnet" id="O81644"/>
<dbReference type="PaxDb" id="3702-AT2G41740.1"/>
<dbReference type="ProteomicsDB" id="242777"/>
<dbReference type="EnsemblPlants" id="AT2G41740.1">
    <property type="protein sequence ID" value="AT2G41740.1"/>
    <property type="gene ID" value="AT2G41740"/>
</dbReference>
<dbReference type="EnsemblPlants" id="AT2G41740.2">
    <property type="protein sequence ID" value="AT2G41740.2"/>
    <property type="gene ID" value="AT2G41740"/>
</dbReference>
<dbReference type="GeneID" id="818773"/>
<dbReference type="Gramene" id="AT2G41740.1">
    <property type="protein sequence ID" value="AT2G41740.1"/>
    <property type="gene ID" value="AT2G41740"/>
</dbReference>
<dbReference type="Gramene" id="AT2G41740.2">
    <property type="protein sequence ID" value="AT2G41740.2"/>
    <property type="gene ID" value="AT2G41740"/>
</dbReference>
<dbReference type="KEGG" id="ath:AT2G41740"/>
<dbReference type="Araport" id="AT2G41740"/>
<dbReference type="TAIR" id="AT2G41740">
    <property type="gene designation" value="VLN2"/>
</dbReference>
<dbReference type="eggNOG" id="KOG0443">
    <property type="taxonomic scope" value="Eukaryota"/>
</dbReference>
<dbReference type="HOGENOM" id="CLU_002568_2_0_1"/>
<dbReference type="InParanoid" id="O81644"/>
<dbReference type="OMA" id="DPNIWSA"/>
<dbReference type="PhylomeDB" id="O81644"/>
<dbReference type="PRO" id="PR:O81644"/>
<dbReference type="Proteomes" id="UP000006548">
    <property type="component" value="Chromosome 2"/>
</dbReference>
<dbReference type="ExpressionAtlas" id="O81644">
    <property type="expression patterns" value="baseline and differential"/>
</dbReference>
<dbReference type="GO" id="GO:0005856">
    <property type="term" value="C:cytoskeleton"/>
    <property type="evidence" value="ECO:0007669"/>
    <property type="project" value="UniProtKB-SubCell"/>
</dbReference>
<dbReference type="GO" id="GO:0005829">
    <property type="term" value="C:cytosol"/>
    <property type="evidence" value="ECO:0007005"/>
    <property type="project" value="TAIR"/>
</dbReference>
<dbReference type="GO" id="GO:0051015">
    <property type="term" value="F:actin filament binding"/>
    <property type="evidence" value="ECO:0007669"/>
    <property type="project" value="InterPro"/>
</dbReference>
<dbReference type="GO" id="GO:0003729">
    <property type="term" value="F:mRNA binding"/>
    <property type="evidence" value="ECO:0000314"/>
    <property type="project" value="TAIR"/>
</dbReference>
<dbReference type="GO" id="GO:0051017">
    <property type="term" value="P:actin filament bundle assembly"/>
    <property type="evidence" value="ECO:0000316"/>
    <property type="project" value="UniProtKB"/>
</dbReference>
<dbReference type="GO" id="GO:0051693">
    <property type="term" value="P:actin filament capping"/>
    <property type="evidence" value="ECO:0007669"/>
    <property type="project" value="UniProtKB-KW"/>
</dbReference>
<dbReference type="CDD" id="cd11290">
    <property type="entry name" value="gelsolin_S1_like"/>
    <property type="match status" value="1"/>
</dbReference>
<dbReference type="CDD" id="cd11289">
    <property type="entry name" value="gelsolin_S2_like"/>
    <property type="match status" value="1"/>
</dbReference>
<dbReference type="CDD" id="cd11292">
    <property type="entry name" value="gelsolin_S3_like"/>
    <property type="match status" value="1"/>
</dbReference>
<dbReference type="CDD" id="cd11293">
    <property type="entry name" value="gelsolin_S4_like"/>
    <property type="match status" value="1"/>
</dbReference>
<dbReference type="CDD" id="cd11288">
    <property type="entry name" value="gelsolin_S5_like"/>
    <property type="match status" value="1"/>
</dbReference>
<dbReference type="CDD" id="cd11291">
    <property type="entry name" value="gelsolin_S6_like"/>
    <property type="match status" value="1"/>
</dbReference>
<dbReference type="FunFam" id="3.40.20.10:FF:000001">
    <property type="entry name" value="Gelsolin"/>
    <property type="match status" value="1"/>
</dbReference>
<dbReference type="FunFam" id="3.40.20.10:FF:000002">
    <property type="entry name" value="Gelsolin"/>
    <property type="match status" value="1"/>
</dbReference>
<dbReference type="FunFam" id="1.10.950.10:FF:000006">
    <property type="entry name" value="Villin-2"/>
    <property type="match status" value="1"/>
</dbReference>
<dbReference type="FunFam" id="3.40.20.10:FF:000039">
    <property type="entry name" value="Villin-4"/>
    <property type="match status" value="1"/>
</dbReference>
<dbReference type="FunFam" id="3.40.20.10:FF:000028">
    <property type="entry name" value="Villin-like 1"/>
    <property type="match status" value="1"/>
</dbReference>
<dbReference type="FunFam" id="3.40.20.10:FF:000038">
    <property type="entry name" value="Villin-like 1"/>
    <property type="match status" value="1"/>
</dbReference>
<dbReference type="Gene3D" id="3.40.20.10">
    <property type="entry name" value="Severin"/>
    <property type="match status" value="6"/>
</dbReference>
<dbReference type="Gene3D" id="1.10.950.10">
    <property type="entry name" value="Villin headpiece domain"/>
    <property type="match status" value="1"/>
</dbReference>
<dbReference type="InterPro" id="IPR029006">
    <property type="entry name" value="ADF-H/Gelsolin-like_dom_sf"/>
</dbReference>
<dbReference type="InterPro" id="IPR007123">
    <property type="entry name" value="Gelsolin-like_dom"/>
</dbReference>
<dbReference type="InterPro" id="IPR007122">
    <property type="entry name" value="Villin/Gelsolin"/>
</dbReference>
<dbReference type="InterPro" id="IPR003128">
    <property type="entry name" value="Villin_headpiece"/>
</dbReference>
<dbReference type="InterPro" id="IPR036886">
    <property type="entry name" value="Villin_headpiece_dom_sf"/>
</dbReference>
<dbReference type="PANTHER" id="PTHR11977:SF51">
    <property type="entry name" value="PROTEIN FLIGHTLESS-1 HOMOLOG"/>
    <property type="match status" value="1"/>
</dbReference>
<dbReference type="PANTHER" id="PTHR11977">
    <property type="entry name" value="VILLIN"/>
    <property type="match status" value="1"/>
</dbReference>
<dbReference type="Pfam" id="PF00626">
    <property type="entry name" value="Gelsolin"/>
    <property type="match status" value="6"/>
</dbReference>
<dbReference type="Pfam" id="PF02209">
    <property type="entry name" value="VHP"/>
    <property type="match status" value="1"/>
</dbReference>
<dbReference type="PRINTS" id="PR00597">
    <property type="entry name" value="GELSOLIN"/>
</dbReference>
<dbReference type="SMART" id="SM00262">
    <property type="entry name" value="GEL"/>
    <property type="match status" value="6"/>
</dbReference>
<dbReference type="SMART" id="SM00153">
    <property type="entry name" value="VHP"/>
    <property type="match status" value="1"/>
</dbReference>
<dbReference type="SUPFAM" id="SSF55753">
    <property type="entry name" value="Actin depolymerizing proteins"/>
    <property type="match status" value="6"/>
</dbReference>
<dbReference type="SUPFAM" id="SSF47050">
    <property type="entry name" value="VHP, Villin headpiece domain"/>
    <property type="match status" value="1"/>
</dbReference>
<dbReference type="PROSITE" id="PS51089">
    <property type="entry name" value="HP"/>
    <property type="match status" value="1"/>
</dbReference>
<protein>
    <recommendedName>
        <fullName evidence="9">Villin-2</fullName>
    </recommendedName>
</protein>
<reference key="1">
    <citation type="journal article" date="2000" name="Plant Physiol.">
        <title>Villin-like actin-binding proteins are expressed ubiquitously in Arabidopsis.</title>
        <authorList>
            <person name="Klahre U."/>
            <person name="Friederich E."/>
            <person name="Kost B."/>
            <person name="Louvard D."/>
            <person name="Chua N.-H."/>
        </authorList>
    </citation>
    <scope>NUCLEOTIDE SEQUENCE [MRNA]</scope>
    <scope>FUNCTION</scope>
    <scope>TISSUE SPECIFICITY</scope>
    <scope>SUBCELLULAR LOCATION</scope>
    <scope>GENE FAMILY</scope>
    <scope>NOMENCLATURE</scope>
    <source>
        <strain>cv. Landsberg erecta</strain>
    </source>
</reference>
<reference key="2">
    <citation type="journal article" date="1999" name="Nature">
        <title>Sequence and analysis of chromosome 2 of the plant Arabidopsis thaliana.</title>
        <authorList>
            <person name="Lin X."/>
            <person name="Kaul S."/>
            <person name="Rounsley S.D."/>
            <person name="Shea T.P."/>
            <person name="Benito M.-I."/>
            <person name="Town C.D."/>
            <person name="Fujii C.Y."/>
            <person name="Mason T.M."/>
            <person name="Bowman C.L."/>
            <person name="Barnstead M.E."/>
            <person name="Feldblyum T.V."/>
            <person name="Buell C.R."/>
            <person name="Ketchum K.A."/>
            <person name="Lee J.J."/>
            <person name="Ronning C.M."/>
            <person name="Koo H.L."/>
            <person name="Moffat K.S."/>
            <person name="Cronin L.A."/>
            <person name="Shen M."/>
            <person name="Pai G."/>
            <person name="Van Aken S."/>
            <person name="Umayam L."/>
            <person name="Tallon L.J."/>
            <person name="Gill J.E."/>
            <person name="Adams M.D."/>
            <person name="Carrera A.J."/>
            <person name="Creasy T.H."/>
            <person name="Goodman H.M."/>
            <person name="Somerville C.R."/>
            <person name="Copenhaver G.P."/>
            <person name="Preuss D."/>
            <person name="Nierman W.C."/>
            <person name="White O."/>
            <person name="Eisen J.A."/>
            <person name="Salzberg S.L."/>
            <person name="Fraser C.M."/>
            <person name="Venter J.C."/>
        </authorList>
    </citation>
    <scope>NUCLEOTIDE SEQUENCE [LARGE SCALE GENOMIC DNA]</scope>
    <source>
        <strain>cv. Columbia</strain>
    </source>
</reference>
<reference key="3">
    <citation type="journal article" date="2017" name="Plant J.">
        <title>Araport11: a complete reannotation of the Arabidopsis thaliana reference genome.</title>
        <authorList>
            <person name="Cheng C.Y."/>
            <person name="Krishnakumar V."/>
            <person name="Chan A.P."/>
            <person name="Thibaud-Nissen F."/>
            <person name="Schobel S."/>
            <person name="Town C.D."/>
        </authorList>
    </citation>
    <scope>GENOME REANNOTATION</scope>
    <source>
        <strain>cv. Columbia</strain>
    </source>
</reference>
<reference key="4">
    <citation type="journal article" date="2003" name="Science">
        <title>Empirical analysis of transcriptional activity in the Arabidopsis genome.</title>
        <authorList>
            <person name="Yamada K."/>
            <person name="Lim J."/>
            <person name="Dale J.M."/>
            <person name="Chen H."/>
            <person name="Shinn P."/>
            <person name="Palm C.J."/>
            <person name="Southwick A.M."/>
            <person name="Wu H.C."/>
            <person name="Kim C.J."/>
            <person name="Nguyen M."/>
            <person name="Pham P.K."/>
            <person name="Cheuk R.F."/>
            <person name="Karlin-Newmann G."/>
            <person name="Liu S.X."/>
            <person name="Lam B."/>
            <person name="Sakano H."/>
            <person name="Wu T."/>
            <person name="Yu G."/>
            <person name="Miranda M."/>
            <person name="Quach H.L."/>
            <person name="Tripp M."/>
            <person name="Chang C.H."/>
            <person name="Lee J.M."/>
            <person name="Toriumi M.J."/>
            <person name="Chan M.M."/>
            <person name="Tang C.C."/>
            <person name="Onodera C.S."/>
            <person name="Deng J.M."/>
            <person name="Akiyama K."/>
            <person name="Ansari Y."/>
            <person name="Arakawa T."/>
            <person name="Banh J."/>
            <person name="Banno F."/>
            <person name="Bowser L."/>
            <person name="Brooks S.Y."/>
            <person name="Carninci P."/>
            <person name="Chao Q."/>
            <person name="Choy N."/>
            <person name="Enju A."/>
            <person name="Goldsmith A.D."/>
            <person name="Gurjal M."/>
            <person name="Hansen N.F."/>
            <person name="Hayashizaki Y."/>
            <person name="Johnson-Hopson C."/>
            <person name="Hsuan V.W."/>
            <person name="Iida K."/>
            <person name="Karnes M."/>
            <person name="Khan S."/>
            <person name="Koesema E."/>
            <person name="Ishida J."/>
            <person name="Jiang P.X."/>
            <person name="Jones T."/>
            <person name="Kawai J."/>
            <person name="Kamiya A."/>
            <person name="Meyers C."/>
            <person name="Nakajima M."/>
            <person name="Narusaka M."/>
            <person name="Seki M."/>
            <person name="Sakurai T."/>
            <person name="Satou M."/>
            <person name="Tamse R."/>
            <person name="Vaysberg M."/>
            <person name="Wallender E.K."/>
            <person name="Wong C."/>
            <person name="Yamamura Y."/>
            <person name="Yuan S."/>
            <person name="Shinozaki K."/>
            <person name="Davis R.W."/>
            <person name="Theologis A."/>
            <person name="Ecker J.R."/>
        </authorList>
    </citation>
    <scope>NUCLEOTIDE SEQUENCE [LARGE SCALE MRNA]</scope>
    <source>
        <strain>cv. Columbia</strain>
    </source>
</reference>
<reference key="5">
    <citation type="submission" date="2006-07" db="EMBL/GenBank/DDBJ databases">
        <title>Large-scale analysis of RIKEN Arabidopsis full-length (RAFL) cDNAs.</title>
        <authorList>
            <person name="Totoki Y."/>
            <person name="Seki M."/>
            <person name="Ishida J."/>
            <person name="Nakajima M."/>
            <person name="Enju A."/>
            <person name="Kamiya A."/>
            <person name="Narusaka M."/>
            <person name="Shin-i T."/>
            <person name="Nakagawa M."/>
            <person name="Sakamoto N."/>
            <person name="Oishi K."/>
            <person name="Kohara Y."/>
            <person name="Kobayashi M."/>
            <person name="Toyoda A."/>
            <person name="Sakaki Y."/>
            <person name="Sakurai T."/>
            <person name="Iida K."/>
            <person name="Akiyama K."/>
            <person name="Satou M."/>
            <person name="Toyoda T."/>
            <person name="Konagaya A."/>
            <person name="Carninci P."/>
            <person name="Kawai J."/>
            <person name="Hayashizaki Y."/>
            <person name="Shinozaki K."/>
        </authorList>
    </citation>
    <scope>NUCLEOTIDE SEQUENCE [LARGE SCALE MRNA]</scope>
    <source>
        <strain>cv. Columbia</strain>
    </source>
</reference>
<reference key="6">
    <citation type="journal article" date="2009" name="Plant Physiol.">
        <title>Large-scale Arabidopsis phosphoproteome profiling reveals novel chloroplast kinase substrates and phosphorylation networks.</title>
        <authorList>
            <person name="Reiland S."/>
            <person name="Messerli G."/>
            <person name="Baerenfaller K."/>
            <person name="Gerrits B."/>
            <person name="Endler A."/>
            <person name="Grossmann J."/>
            <person name="Gruissem W."/>
            <person name="Baginsky S."/>
        </authorList>
    </citation>
    <scope>IDENTIFICATION BY MASS SPECTROMETRY [LARGE SCALE ANALYSIS]</scope>
</reference>
<reference key="7">
    <citation type="journal article" date="2012" name="Plant J.">
        <title>Arabidopsis VILLIN2 and VILLIN3 act redundantly in sclerenchyma development via bundling of actin filaments.</title>
        <authorList>
            <person name="Bao C."/>
            <person name="Wang J."/>
            <person name="Zhang R."/>
            <person name="Zhang B."/>
            <person name="Zhang H."/>
            <person name="Zhou Y."/>
            <person name="Huang S."/>
        </authorList>
    </citation>
    <scope>FUNCTION</scope>
    <scope>TISSUE SPECIFICITY</scope>
    <scope>DISRUPTION PHENOTYPE</scope>
</reference>
<reference key="8">
    <citation type="journal article" date="2012" name="Plant Physiol.">
        <title>Arabidopsis VILLIN2 and VILLIN3 are required for the generation of thick actin filament bundles and for directional organ growth.</title>
        <authorList>
            <person name="van der Honing H.S."/>
            <person name="Kieft H."/>
            <person name="Emons A.M."/>
            <person name="Ketelaar T."/>
        </authorList>
    </citation>
    <scope>FUNCTION</scope>
    <scope>DISRUPTION PHENOTYPE</scope>
    <scope>TISSUE SPECIFICITY</scope>
</reference>
<reference key="9">
    <citation type="journal article" date="2013" name="Plant Cell">
        <title>Arabidopsis villins promote actin turnover at pollen tube tips and facilitate the construction of actin collars.</title>
        <authorList>
            <person name="Qu X."/>
            <person name="Zhang H."/>
            <person name="Xie Y."/>
            <person name="Wang J."/>
            <person name="Chen N."/>
            <person name="Huang S."/>
        </authorList>
    </citation>
    <scope>FUNCTION</scope>
    <scope>DISRUPTION PHENOTYPE</scope>
    <scope>SUBCELLULAR LOCATION</scope>
</reference>
<sequence>MSTKVLDPAFQGAGQKPGTEIWRIENFEAVPVPKSEHGKFYMGDTYIVLQTTQNKGGAYLFDIHFWIGKDTSQDEAGTAAVKTVELDAVLGGRAVQHREIQGHESDKFLSYFKPCIIPLEGGVASGFKTVEEEVFETRLYTCKGKRAIRLKQVPFARSSLNHDDVFILDTEEKIYQFNGANSNIQERAKALEVVQYLKDKYHEGTCDVAIVDDGKLDTESDSGAFWVLFGGFAPIGRKVANDDDIVPESTPPKLYCITDGKMEPIDGDLSKSMLENTKCYLLDCGAEIYIWVGRVTQVDERKAASQSAEEFLASENRPKATHVTRVIQGYESHSFKSNFDSWPSGSATPGNEEGRGKVAALLKQQGVGLKGIAKSAPVNEDIPPLLESGGKLEVWYVNGKVKTPLPKEDIGKLYSGDCYLVLYTYHSGERKDEYFLSCWFGKKSIPEDQDTAIRLANTMSNSLKGRPVQGRIYEGKEPPQFVALFQPMVVLKGGLSSGYKSSMGESESTDETYTPESIALVQVSGTGVHNNKAVQVETVATSLNSYECFLLQSGTSMFLWHGNQSTHEQLELATKVAEFLKPGITLKHAKEGTESSTFWFALGGKQNFTSKKASSETIRDPHLFSFAFNRGKFQVEEIYNFAQDDLLTEDIYFLDTHAEVFVWVGQCVEPKEKQTVFEIGQKYIDLAGSLEGLHPKVPIYKINEGNEPCFFTTYFSWDATKAIVQGNSFQKKASLLFGTHHVVEDKSNGGNQGLRQRAEALAALNSAFNSSSNRPAYSSQDRLNESHDGPRQRAEALAALSSAFNSSSSSTKSPPPPRPVGTSQASQRAAAVAALSQVLVAENKKSPDTSPTRRSTSSNPADDIPLTEAKDEEEASEVAGLEAKEEEEVSPAADETEAKQETEEQGDSEIQPSGATFTYEQLRAKSENPVTGIDFKRREAYLSEEEFQSVFGIEKEAFNNLPRWKQDLLKKKFDLF</sequence>
<keyword id="KW-0117">Actin capping</keyword>
<keyword id="KW-0009">Actin-binding</keyword>
<keyword id="KW-0106">Calcium</keyword>
<keyword id="KW-0963">Cytoplasm</keyword>
<keyword id="KW-0206">Cytoskeleton</keyword>
<keyword id="KW-0597">Phosphoprotein</keyword>
<keyword id="KW-1185">Reference proteome</keyword>
<keyword id="KW-0677">Repeat</keyword>
<gene>
    <name evidence="9" type="primary">VLN2</name>
    <name evidence="11" type="ordered locus">At2g41740</name>
    <name evidence="12" type="ORF">T11A7.16</name>
</gene>
<organism>
    <name type="scientific">Arabidopsis thaliana</name>
    <name type="common">Mouse-ear cress</name>
    <dbReference type="NCBI Taxonomy" id="3702"/>
    <lineage>
        <taxon>Eukaryota</taxon>
        <taxon>Viridiplantae</taxon>
        <taxon>Streptophyta</taxon>
        <taxon>Embryophyta</taxon>
        <taxon>Tracheophyta</taxon>
        <taxon>Spermatophyta</taxon>
        <taxon>Magnoliopsida</taxon>
        <taxon>eudicotyledons</taxon>
        <taxon>Gunneridae</taxon>
        <taxon>Pentapetalae</taxon>
        <taxon>rosids</taxon>
        <taxon>malvids</taxon>
        <taxon>Brassicales</taxon>
        <taxon>Brassicaceae</taxon>
        <taxon>Camelineae</taxon>
        <taxon>Arabidopsis</taxon>
    </lineage>
</organism>
<evidence type="ECO:0000250" key="1">
    <source>
        <dbReference type="UniProtKB" id="O81645"/>
    </source>
</evidence>
<evidence type="ECO:0000255" key="2"/>
<evidence type="ECO:0000255" key="3">
    <source>
        <dbReference type="PROSITE-ProRule" id="PRU00595"/>
    </source>
</evidence>
<evidence type="ECO:0000256" key="4">
    <source>
        <dbReference type="SAM" id="MobiDB-lite"/>
    </source>
</evidence>
<evidence type="ECO:0000269" key="5">
    <source>
    </source>
</evidence>
<evidence type="ECO:0000269" key="6">
    <source>
    </source>
</evidence>
<evidence type="ECO:0000269" key="7">
    <source>
    </source>
</evidence>
<evidence type="ECO:0000269" key="8">
    <source>
    </source>
</evidence>
<evidence type="ECO:0000303" key="9">
    <source>
    </source>
</evidence>
<evidence type="ECO:0000305" key="10"/>
<evidence type="ECO:0000312" key="11">
    <source>
        <dbReference type="Araport" id="AT2G41740"/>
    </source>
</evidence>
<evidence type="ECO:0000312" key="12">
    <source>
        <dbReference type="EMBL" id="AAC02774.2"/>
    </source>
</evidence>
<comment type="function">
    <text evidence="5 6 7 8">Ca(2+)-regulated actin-binding protein. Involved in actin filaments bundling. Caps the barbed end of actin filaments and is able to sever them in a calcium-dependent manner. Required for the construction of actin collars in pollen tubes. Acts redundantly with VLN5 (AC Q9LVC6) to generate thick actin filament bundles and to regulate polarized pollen tube growth (PubMed:23715472). Acts redundantly with VLN3 (AC O81645) to regulate directional organ growth and in sclerenchyma development (PubMed:22209875, PubMed:22563899).</text>
</comment>
<comment type="subcellular location">
    <subcellularLocation>
        <location evidence="5 8">Cytoplasm</location>
        <location evidence="5 8">Cytoskeleton</location>
    </subcellularLocation>
    <text>Present in the apical and subapical regions of pollen tubes.</text>
</comment>
<comment type="tissue specificity">
    <text evidence="5 6 7">Expressed in all tissues examined. Mainly detected in the root epidermis and vasculature. Expressed in the root cap.</text>
</comment>
<comment type="disruption phenotype">
    <text evidence="6 7 8">No visible phenotype and no visible effect on pollen tube growth. Decreased severing frequency of actin filaments. Vln2 and vln5 double mutants have pollen tubes curled and wider at some regions along the tube. They accumulate actin filaments at the tips of pollen tubes (PubMed:23715472). Vln2 and vln3 double mutants show anomaly in the growth direction of organs (PubMed:22209875) and defects in sclerenchyma development, but no alterations in the secondary cell-wall machinery (PubMed:22563899).</text>
</comment>
<comment type="similarity">
    <text evidence="10">Belongs to the villin/gelsolin family.</text>
</comment>